<accession>P74879</accession>
<accession>Q9XDM5</accession>
<sequence length="404" mass="43995">MSYKIMAINAGSSSLKFQLLEMPQGDMLCQGLIERIGMADAQVTIKTHSQKWQETVPVADHRDAVTLLLEKLLGYQIINSLRDIDGVGHRVAHGGEFFKDSTLVTDETLAQIERLAELAPLHNPVNALGIHVFRQLLPDAPSVAVFDTAFHQTLDEPAYIYPLPWHYYAELGIRRYGFHGTSHKYVSGVLAEKLGVPLSALRVICCHLGNGSSICAIKNGRSVNTSMGFTPQSGVMMGTRSGDIDPSILPWIAQRESKTPQQLNQLLNNESGLLGVSGVSSDYRDVEQAANTGNRQAKLALTLFAERIRATIGSYIMQMGGLDALVFTGGIGENSARARSAVCHNLQFLGLAVDEEKNQRNATFIQTENALVKVAVINTNEELMIAQDVMRIALPATEGLCVPA</sequence>
<proteinExistence type="evidence at protein level"/>
<name>PDUW_SALTY</name>
<evidence type="ECO:0000255" key="1">
    <source>
        <dbReference type="HAMAP-Rule" id="MF_01882"/>
    </source>
</evidence>
<evidence type="ECO:0000269" key="2">
    <source>
    </source>
</evidence>
<evidence type="ECO:0000269" key="3">
    <source>
    </source>
</evidence>
<evidence type="ECO:0000269" key="4">
    <source>
    </source>
</evidence>
<evidence type="ECO:0000303" key="5">
    <source>
    </source>
</evidence>
<evidence type="ECO:0000303" key="6">
    <source>
    </source>
</evidence>
<evidence type="ECO:0000305" key="7"/>
<evidence type="ECO:0000305" key="8">
    <source>
    </source>
</evidence>
<evidence type="ECO:0000305" key="9">
    <source>
    </source>
</evidence>
<evidence type="ECO:0000305" key="10">
    <source>
    </source>
</evidence>
<keyword id="KW-0067">ATP-binding</keyword>
<keyword id="KW-0963">Cytoplasm</keyword>
<keyword id="KW-0418">Kinase</keyword>
<keyword id="KW-0547">Nucleotide-binding</keyword>
<keyword id="KW-1185">Reference proteome</keyword>
<keyword id="KW-0808">Transferase</keyword>
<reference key="1">
    <citation type="submission" date="1996-08" db="EMBL/GenBank/DDBJ databases">
        <authorList>
            <person name="Denduangboripant J."/>
            <person name="Panbangred W."/>
        </authorList>
    </citation>
    <scope>NUCLEOTIDE SEQUENCE [GENOMIC DNA]</scope>
    <source>
        <strain>23566</strain>
    </source>
</reference>
<reference key="2">
    <citation type="journal article" date="1999" name="J. Bacteriol.">
        <title>The propanediol utilization (pdu) operon of Salmonella enterica serovar typhimurium LT2 includes genes necessary for formation of polyhedral organelles involved in coenzyme B(12)-dependent 1, 2-propanediol degradation.</title>
        <authorList>
            <person name="Bobik T.A."/>
            <person name="Havemann G.D."/>
            <person name="Busch R.J."/>
            <person name="Williams D.S."/>
            <person name="Aldrich H.C."/>
        </authorList>
    </citation>
    <scope>NUCLEOTIDE SEQUENCE [GENOMIC DNA]</scope>
    <scope>PATHWAY</scope>
    <scope>INDUCTION</scope>
    <source>
        <strain>LT2</strain>
    </source>
</reference>
<reference key="3">
    <citation type="journal article" date="2001" name="Nature">
        <title>Complete genome sequence of Salmonella enterica serovar Typhimurium LT2.</title>
        <authorList>
            <person name="McClelland M."/>
            <person name="Sanderson K.E."/>
            <person name="Spieth J."/>
            <person name="Clifton S.W."/>
            <person name="Latreille P."/>
            <person name="Courtney L."/>
            <person name="Porwollik S."/>
            <person name="Ali J."/>
            <person name="Dante M."/>
            <person name="Du F."/>
            <person name="Hou S."/>
            <person name="Layman D."/>
            <person name="Leonard S."/>
            <person name="Nguyen C."/>
            <person name="Scott K."/>
            <person name="Holmes A."/>
            <person name="Grewal N."/>
            <person name="Mulvaney E."/>
            <person name="Ryan E."/>
            <person name="Sun H."/>
            <person name="Florea L."/>
            <person name="Miller W."/>
            <person name="Stoneking T."/>
            <person name="Nhan M."/>
            <person name="Waterston R."/>
            <person name="Wilson R.K."/>
        </authorList>
    </citation>
    <scope>NUCLEOTIDE SEQUENCE [LARGE SCALE GENOMIC DNA]</scope>
    <source>
        <strain>LT2 / SGSC1412 / ATCC 700720</strain>
    </source>
</reference>
<reference key="4">
    <citation type="journal article" date="2003" name="J. Bacteriol.">
        <title>Propionyl coenzyme A is a common intermediate in the 1,2-propanediol and propionate catabolic pathways needed for expression of the prpBCDE operon during growth of Salmonella enterica on 1,2-propanediol.</title>
        <authorList>
            <person name="Palacios S."/>
            <person name="Starai V.J."/>
            <person name="Escalante-Semerena J.C."/>
        </authorList>
    </citation>
    <scope>FUNCTION</scope>
    <scope>CATALYTIC ACTIVITY</scope>
    <scope>PATHWAY</scope>
    <scope>DISRUPTION PHENOTYPE</scope>
    <source>
        <strain>LT2</strain>
    </source>
</reference>
<reference key="5">
    <citation type="journal article" date="2016" name="Mol. Microbiol.">
        <title>The EutQ and EutP proteins are novel acetate kinases involved in ethanolamine catabolism: physiological implications for the function of the ethanolamine metabolosome in Salmonella enterica.</title>
        <authorList>
            <person name="Moore T.C."/>
            <person name="Escalante-Semerena J.C."/>
        </authorList>
    </citation>
    <scope>FUNCTION</scope>
    <scope>SUBCELLULAR LOCATION</scope>
    <source>
        <strain>LT2</strain>
    </source>
</reference>
<organism>
    <name type="scientific">Salmonella typhimurium (strain LT2 / SGSC1412 / ATCC 700720)</name>
    <dbReference type="NCBI Taxonomy" id="99287"/>
    <lineage>
        <taxon>Bacteria</taxon>
        <taxon>Pseudomonadati</taxon>
        <taxon>Pseudomonadota</taxon>
        <taxon>Gammaproteobacteria</taxon>
        <taxon>Enterobacterales</taxon>
        <taxon>Enterobacteriaceae</taxon>
        <taxon>Salmonella</taxon>
    </lineage>
</organism>
<dbReference type="EC" id="2.7.2.15" evidence="1 9"/>
<dbReference type="EMBL" id="U67435">
    <property type="protein sequence ID" value="AAB09552.1"/>
    <property type="molecule type" value="Genomic_DNA"/>
</dbReference>
<dbReference type="EMBL" id="AF026270">
    <property type="protein sequence ID" value="AAD39021.1"/>
    <property type="status" value="ALT_INIT"/>
    <property type="molecule type" value="Genomic_DNA"/>
</dbReference>
<dbReference type="EMBL" id="AE006468">
    <property type="protein sequence ID" value="AAL20961.1"/>
    <property type="molecule type" value="Genomic_DNA"/>
</dbReference>
<dbReference type="RefSeq" id="NP_461002.1">
    <property type="nucleotide sequence ID" value="NC_003197.2"/>
</dbReference>
<dbReference type="RefSeq" id="WP_000120647.1">
    <property type="nucleotide sequence ID" value="NC_003197.2"/>
</dbReference>
<dbReference type="SMR" id="P74879"/>
<dbReference type="STRING" id="99287.STM2057"/>
<dbReference type="PaxDb" id="99287-STM2057"/>
<dbReference type="GeneID" id="1253578"/>
<dbReference type="KEGG" id="stm:STM2057"/>
<dbReference type="PATRIC" id="fig|99287.12.peg.2179"/>
<dbReference type="HOGENOM" id="CLU_020352_0_1_6"/>
<dbReference type="OMA" id="PLPWRYY"/>
<dbReference type="PhylomeDB" id="P74879"/>
<dbReference type="BioCyc" id="MetaCyc:STM2057-MONOMER"/>
<dbReference type="BioCyc" id="SENT99287:STM2057-MONOMER"/>
<dbReference type="UniPathway" id="UPA00621"/>
<dbReference type="UniPathway" id="UPA00946"/>
<dbReference type="Proteomes" id="UP000001014">
    <property type="component" value="Chromosome"/>
</dbReference>
<dbReference type="GO" id="GO:0005737">
    <property type="term" value="C:cytoplasm"/>
    <property type="evidence" value="ECO:0007669"/>
    <property type="project" value="UniProtKB-SubCell"/>
</dbReference>
<dbReference type="GO" id="GO:0008776">
    <property type="term" value="F:acetate kinase activity"/>
    <property type="evidence" value="ECO:0000318"/>
    <property type="project" value="GO_Central"/>
</dbReference>
<dbReference type="GO" id="GO:0005524">
    <property type="term" value="F:ATP binding"/>
    <property type="evidence" value="ECO:0007669"/>
    <property type="project" value="UniProtKB-KW"/>
</dbReference>
<dbReference type="GO" id="GO:0008980">
    <property type="term" value="F:propionate kinase activity"/>
    <property type="evidence" value="ECO:0007669"/>
    <property type="project" value="UniProtKB-UniRule"/>
</dbReference>
<dbReference type="GO" id="GO:0006083">
    <property type="term" value="P:acetate metabolic process"/>
    <property type="evidence" value="ECO:0000318"/>
    <property type="project" value="GO_Central"/>
</dbReference>
<dbReference type="GO" id="GO:0051144">
    <property type="term" value="P:propanediol catabolic process"/>
    <property type="evidence" value="ECO:0007669"/>
    <property type="project" value="UniProtKB-UniPathway"/>
</dbReference>
<dbReference type="GO" id="GO:0019543">
    <property type="term" value="P:propionate catabolic process"/>
    <property type="evidence" value="ECO:0007669"/>
    <property type="project" value="InterPro"/>
</dbReference>
<dbReference type="CDD" id="cd24010">
    <property type="entry name" value="ASKHA_NBD_AcK_PK"/>
    <property type="match status" value="1"/>
</dbReference>
<dbReference type="Gene3D" id="3.30.420.40">
    <property type="match status" value="2"/>
</dbReference>
<dbReference type="HAMAP" id="MF_00020">
    <property type="entry name" value="Acetate_kinase"/>
    <property type="match status" value="1"/>
</dbReference>
<dbReference type="HAMAP" id="MF_01882">
    <property type="entry name" value="Propion_kin_subfam2"/>
    <property type="match status" value="1"/>
</dbReference>
<dbReference type="InterPro" id="IPR004372">
    <property type="entry name" value="Ac/propionate_kinase"/>
</dbReference>
<dbReference type="InterPro" id="IPR000890">
    <property type="entry name" value="Aliphatic_acid_kin_short-chain"/>
</dbReference>
<dbReference type="InterPro" id="IPR023865">
    <property type="entry name" value="Aliphatic_acid_kinase_CS"/>
</dbReference>
<dbReference type="InterPro" id="IPR043129">
    <property type="entry name" value="ATPase_NBD"/>
</dbReference>
<dbReference type="InterPro" id="IPR024896">
    <property type="entry name" value="Propionate_kinase_PduW"/>
</dbReference>
<dbReference type="NCBIfam" id="TIGR00016">
    <property type="entry name" value="ackA"/>
    <property type="match status" value="1"/>
</dbReference>
<dbReference type="NCBIfam" id="NF009063">
    <property type="entry name" value="PRK12397.1"/>
    <property type="match status" value="1"/>
</dbReference>
<dbReference type="PANTHER" id="PTHR21060">
    <property type="entry name" value="ACETATE KINASE"/>
    <property type="match status" value="1"/>
</dbReference>
<dbReference type="PANTHER" id="PTHR21060:SF15">
    <property type="entry name" value="ACETATE KINASE-RELATED"/>
    <property type="match status" value="1"/>
</dbReference>
<dbReference type="Pfam" id="PF00871">
    <property type="entry name" value="Acetate_kinase"/>
    <property type="match status" value="1"/>
</dbReference>
<dbReference type="PIRSF" id="PIRSF000722">
    <property type="entry name" value="Acetate_prop_kin"/>
    <property type="match status" value="1"/>
</dbReference>
<dbReference type="PRINTS" id="PR00471">
    <property type="entry name" value="ACETATEKNASE"/>
</dbReference>
<dbReference type="SUPFAM" id="SSF53067">
    <property type="entry name" value="Actin-like ATPase domain"/>
    <property type="match status" value="2"/>
</dbReference>
<dbReference type="PROSITE" id="PS01075">
    <property type="entry name" value="ACETATE_KINASE_1"/>
    <property type="match status" value="1"/>
</dbReference>
<dbReference type="PROSITE" id="PS01076">
    <property type="entry name" value="ACETATE_KINASE_2"/>
    <property type="match status" value="1"/>
</dbReference>
<comment type="function">
    <text evidence="3 4">Works with phosphate acetyltransferase (pta) to capture exogenous propionate and regenerate propionyl-CoA during degradation of propionate and 1,2-propanediol (1,2-PD). Ectopic expression partially complements a cobB deletion allowing some growth on propionate (PubMed:12700259). Restores growth to an eutQ deletion on ethanolamine and tetrathionate under anoxic conditions (PubMed:26448059).</text>
</comment>
<comment type="catalytic activity">
    <reaction evidence="1 9">
        <text>propanoate + ATP = propanoyl phosphate + ADP</text>
        <dbReference type="Rhea" id="RHEA:23148"/>
        <dbReference type="ChEBI" id="CHEBI:17272"/>
        <dbReference type="ChEBI" id="CHEBI:30616"/>
        <dbReference type="ChEBI" id="CHEBI:58933"/>
        <dbReference type="ChEBI" id="CHEBI:456216"/>
        <dbReference type="EC" id="2.7.2.15"/>
    </reaction>
</comment>
<comment type="pathway">
    <text evidence="3 8">Polyol metabolism; 1,2-propanediol degradation.</text>
</comment>
<comment type="pathway">
    <text evidence="3">Organic acid metabolism; propanoate degradation.</text>
</comment>
<comment type="subcellular location">
    <subcellularLocation>
        <location evidence="1 10">Cytoplasm</location>
    </subcellularLocation>
</comment>
<comment type="induction">
    <text evidence="2">The BMC operon and BMC production is induced by growth on 1,2-PD vitamin B12 medium.</text>
</comment>
<comment type="disruption phenotype">
    <text evidence="3">Decreased propionate kinase activity, cells grow to lower density on 1,2-PD and excrete more propionate into the medium. A double pduW-pduX deletion grows as well as wild-type on 1,2-PD.</text>
</comment>
<comment type="similarity">
    <text evidence="1">Belongs to the acetokinase family. PduW subfamily.</text>
</comment>
<comment type="caution">
    <text evidence="7">Was originally (Ref.1) thought to be AckA.</text>
</comment>
<comment type="sequence caution" evidence="7">
    <conflict type="erroneous initiation">
        <sequence resource="EMBL-CDS" id="AAD39021"/>
    </conflict>
    <text>Truncated N-terminus.</text>
</comment>
<protein>
    <recommendedName>
        <fullName evidence="1 6">Propionate kinase PduW</fullName>
        <ecNumber evidence="1 9">2.7.2.15</ecNumber>
    </recommendedName>
</protein>
<gene>
    <name evidence="1 5" type="primary">pduW</name>
    <name type="ordered locus">STM2057</name>
</gene>
<feature type="chain" id="PRO_0000107651" description="Propionate kinase PduW">
    <location>
        <begin position="1"/>
        <end position="404"/>
    </location>
</feature>
<feature type="sequence conflict" description="In Ref. 1; AAB09552." evidence="7" ref="1">
    <original>G</original>
    <variation>R</variation>
    <location>
        <position position="25"/>
    </location>
</feature>
<feature type="sequence conflict" description="In Ref. 1; AAB09552." evidence="7" ref="1">
    <original>DHRDAVTL</original>
    <variation>RSSRCVNW</variation>
    <location>
        <begin position="60"/>
        <end position="67"/>
    </location>
</feature>
<feature type="sequence conflict" description="In Ref. 1; AAB09552." evidence="7" ref="1">
    <original>A</original>
    <variation>R</variation>
    <location>
        <position position="92"/>
    </location>
</feature>
<feature type="sequence conflict" description="In Ref. 1; AAB09552." evidence="7" ref="1">
    <original>S</original>
    <variation>T</variation>
    <location>
        <position position="212"/>
    </location>
</feature>
<feature type="sequence conflict" description="In Ref. 1; AAB09552." evidence="7" ref="1">
    <original>SILPWIAQRESKTPQ</original>
    <variation>HSAVDSPARNENAE</variation>
    <location>
        <begin position="247"/>
        <end position="261"/>
    </location>
</feature>
<feature type="sequence conflict" description="In Ref. 1; AAB09552." evidence="7" ref="1">
    <original>ALTLFAERIR</original>
    <variation>RSHSVCRTHS</variation>
    <location>
        <begin position="300"/>
        <end position="309"/>
    </location>
</feature>
<feature type="sequence conflict" description="In Ref. 1; AAB09552." evidence="7" ref="1">
    <original>VCHNLQFLGLA</original>
    <variation>CAIISIFGLS</variation>
    <location>
        <begin position="342"/>
        <end position="352"/>
    </location>
</feature>